<comment type="function">
    <text evidence="1">Forms part of the ribosomal stalk which helps the ribosome interact with GTP-bound translation factors.</text>
</comment>
<comment type="subunit">
    <text evidence="1">Part of the ribosomal stalk of the 50S ribosomal subunit. Interacts with L10 and the large rRNA to form the base of the stalk. L10 forms an elongated spine to which L12 dimers bind in a sequential fashion forming a multimeric L10(L12)X complex.</text>
</comment>
<comment type="similarity">
    <text evidence="1">Belongs to the universal ribosomal protein uL11 family.</text>
</comment>
<gene>
    <name evidence="1" type="primary">rpl11</name>
    <name type="ordered locus">NP_4454A</name>
</gene>
<accession>Q3INI5</accession>
<dbReference type="EMBL" id="CR936257">
    <property type="protein sequence ID" value="CAI50318.1"/>
    <property type="molecule type" value="Genomic_DNA"/>
</dbReference>
<dbReference type="RefSeq" id="WP_011323933.1">
    <property type="nucleotide sequence ID" value="NC_007426.1"/>
</dbReference>
<dbReference type="SMR" id="Q3INI5"/>
<dbReference type="STRING" id="348780.NP_4454A"/>
<dbReference type="EnsemblBacteria" id="CAI50318">
    <property type="protein sequence ID" value="CAI50318"/>
    <property type="gene ID" value="NP_4454A"/>
</dbReference>
<dbReference type="GeneID" id="3703121"/>
<dbReference type="KEGG" id="nph:NP_4454A"/>
<dbReference type="eggNOG" id="arCOG04372">
    <property type="taxonomic scope" value="Archaea"/>
</dbReference>
<dbReference type="HOGENOM" id="CLU_074237_4_0_2"/>
<dbReference type="OrthoDB" id="8842at2157"/>
<dbReference type="Proteomes" id="UP000002698">
    <property type="component" value="Chromosome"/>
</dbReference>
<dbReference type="GO" id="GO:0015934">
    <property type="term" value="C:large ribosomal subunit"/>
    <property type="evidence" value="ECO:0007669"/>
    <property type="project" value="TreeGrafter"/>
</dbReference>
<dbReference type="GO" id="GO:0070180">
    <property type="term" value="F:large ribosomal subunit rRNA binding"/>
    <property type="evidence" value="ECO:0007669"/>
    <property type="project" value="UniProtKB-UniRule"/>
</dbReference>
<dbReference type="GO" id="GO:0003735">
    <property type="term" value="F:structural constituent of ribosome"/>
    <property type="evidence" value="ECO:0007669"/>
    <property type="project" value="InterPro"/>
</dbReference>
<dbReference type="GO" id="GO:0006412">
    <property type="term" value="P:translation"/>
    <property type="evidence" value="ECO:0007669"/>
    <property type="project" value="UniProtKB-UniRule"/>
</dbReference>
<dbReference type="CDD" id="cd00349">
    <property type="entry name" value="Ribosomal_L11"/>
    <property type="match status" value="1"/>
</dbReference>
<dbReference type="Gene3D" id="1.10.10.250">
    <property type="entry name" value="Ribosomal protein L11, C-terminal domain"/>
    <property type="match status" value="1"/>
</dbReference>
<dbReference type="Gene3D" id="3.30.1550.10">
    <property type="entry name" value="Ribosomal protein L11/L12, N-terminal domain"/>
    <property type="match status" value="1"/>
</dbReference>
<dbReference type="HAMAP" id="MF_00736">
    <property type="entry name" value="Ribosomal_uL11"/>
    <property type="match status" value="1"/>
</dbReference>
<dbReference type="InterPro" id="IPR000911">
    <property type="entry name" value="Ribosomal_uL11"/>
</dbReference>
<dbReference type="InterPro" id="IPR020783">
    <property type="entry name" value="Ribosomal_uL11_C"/>
</dbReference>
<dbReference type="InterPro" id="IPR036769">
    <property type="entry name" value="Ribosomal_uL11_C_sf"/>
</dbReference>
<dbReference type="InterPro" id="IPR020785">
    <property type="entry name" value="Ribosomal_uL11_CS"/>
</dbReference>
<dbReference type="InterPro" id="IPR020784">
    <property type="entry name" value="Ribosomal_uL11_N"/>
</dbReference>
<dbReference type="InterPro" id="IPR036796">
    <property type="entry name" value="Ribosomal_uL11_N_sf"/>
</dbReference>
<dbReference type="NCBIfam" id="NF002232">
    <property type="entry name" value="PRK01143.1"/>
    <property type="match status" value="1"/>
</dbReference>
<dbReference type="PANTHER" id="PTHR11661">
    <property type="entry name" value="60S RIBOSOMAL PROTEIN L12"/>
    <property type="match status" value="1"/>
</dbReference>
<dbReference type="PANTHER" id="PTHR11661:SF1">
    <property type="entry name" value="LARGE RIBOSOMAL SUBUNIT PROTEIN UL11M"/>
    <property type="match status" value="1"/>
</dbReference>
<dbReference type="Pfam" id="PF00298">
    <property type="entry name" value="Ribosomal_L11"/>
    <property type="match status" value="1"/>
</dbReference>
<dbReference type="Pfam" id="PF03946">
    <property type="entry name" value="Ribosomal_L11_N"/>
    <property type="match status" value="1"/>
</dbReference>
<dbReference type="SMART" id="SM00649">
    <property type="entry name" value="RL11"/>
    <property type="match status" value="1"/>
</dbReference>
<dbReference type="SUPFAM" id="SSF54747">
    <property type="entry name" value="Ribosomal L11/L12e N-terminal domain"/>
    <property type="match status" value="1"/>
</dbReference>
<dbReference type="SUPFAM" id="SSF46906">
    <property type="entry name" value="Ribosomal protein L11, C-terminal domain"/>
    <property type="match status" value="1"/>
</dbReference>
<dbReference type="PROSITE" id="PS00359">
    <property type="entry name" value="RIBOSOMAL_L11"/>
    <property type="match status" value="1"/>
</dbReference>
<proteinExistence type="inferred from homology"/>
<name>RL11_NATPD</name>
<reference key="1">
    <citation type="journal article" date="2005" name="Genome Res.">
        <title>Living with two extremes: conclusions from the genome sequence of Natronomonas pharaonis.</title>
        <authorList>
            <person name="Falb M."/>
            <person name="Pfeiffer F."/>
            <person name="Palm P."/>
            <person name="Rodewald K."/>
            <person name="Hickmann V."/>
            <person name="Tittor J."/>
            <person name="Oesterhelt D."/>
        </authorList>
    </citation>
    <scope>NUCLEOTIDE SEQUENCE [LARGE SCALE GENOMIC DNA]</scope>
    <source>
        <strain>ATCC 35678 / DSM 2160 / CIP 103997 / JCM 8858 / NBRC 14720 / NCIMB 2260 / Gabara</strain>
    </source>
</reference>
<keyword id="KW-1185">Reference proteome</keyword>
<keyword id="KW-0687">Ribonucleoprotein</keyword>
<keyword id="KW-0689">Ribosomal protein</keyword>
<keyword id="KW-0694">RNA-binding</keyword>
<keyword id="KW-0699">rRNA-binding</keyword>
<organism>
    <name type="scientific">Natronomonas pharaonis (strain ATCC 35678 / DSM 2160 / CIP 103997 / JCM 8858 / NBRC 14720 / NCIMB 2260 / Gabara)</name>
    <name type="common">Halobacterium pharaonis</name>
    <dbReference type="NCBI Taxonomy" id="348780"/>
    <lineage>
        <taxon>Archaea</taxon>
        <taxon>Methanobacteriati</taxon>
        <taxon>Methanobacteriota</taxon>
        <taxon>Stenosarchaea group</taxon>
        <taxon>Halobacteria</taxon>
        <taxon>Halobacteriales</taxon>
        <taxon>Haloarculaceae</taxon>
        <taxon>Natronomonas</taxon>
    </lineage>
</organism>
<protein>
    <recommendedName>
        <fullName evidence="1">Large ribosomal subunit protein uL11</fullName>
    </recommendedName>
    <alternativeName>
        <fullName evidence="3">50S ribosomal protein L11</fullName>
    </alternativeName>
</protein>
<feature type="chain" id="PRO_0000258250" description="Large ribosomal subunit protein uL11">
    <location>
        <begin position="1"/>
        <end position="163"/>
    </location>
</feature>
<feature type="region of interest" description="Disordered" evidence="2">
    <location>
        <begin position="1"/>
        <end position="25"/>
    </location>
</feature>
<sequence>MAGTIEVLVAGGQADPGPPLGPELGPTPVDVQAVVNEINDQTEAFDGTEVPVTIDYDDDGSFDIDVGVPPTAALIKDELDFETGSGEPNEEFVADMSAEQLKTVAEQKLPDLLAYDTRNAAKEVAGTCVSLGVTIEGEDARTFNQRLDNGEFDDVFAEAEPAA</sequence>
<evidence type="ECO:0000255" key="1">
    <source>
        <dbReference type="HAMAP-Rule" id="MF_00736"/>
    </source>
</evidence>
<evidence type="ECO:0000256" key="2">
    <source>
        <dbReference type="SAM" id="MobiDB-lite"/>
    </source>
</evidence>
<evidence type="ECO:0000305" key="3"/>